<name>RLI1_YEAST</name>
<feature type="chain" id="PRO_0000268703" description="Translation initiation factor RLI1">
    <location>
        <begin position="1"/>
        <end position="608"/>
    </location>
</feature>
<feature type="domain" description="4Fe-4S ferredoxin-type 1" evidence="2">
    <location>
        <begin position="7"/>
        <end position="39"/>
    </location>
</feature>
<feature type="domain" description="4Fe-4S ferredoxin-type 2" evidence="2">
    <location>
        <begin position="46"/>
        <end position="75"/>
    </location>
</feature>
<feature type="domain" description="ABC transporter 1" evidence="1">
    <location>
        <begin position="70"/>
        <end position="320"/>
    </location>
</feature>
<feature type="domain" description="ABC transporter 2" evidence="1">
    <location>
        <begin position="345"/>
        <end position="568"/>
    </location>
</feature>
<feature type="binding site" evidence="1">
    <location>
        <begin position="110"/>
        <end position="117"/>
    </location>
    <ligand>
        <name>ATP</name>
        <dbReference type="ChEBI" id="CHEBI:30616"/>
    </ligand>
</feature>
<feature type="binding site" evidence="1">
    <location>
        <begin position="385"/>
        <end position="392"/>
    </location>
    <ligand>
        <name>ATP</name>
        <dbReference type="ChEBI" id="CHEBI:30616"/>
    </ligand>
</feature>
<feature type="modified residue" description="Phosphoserine" evidence="11">
    <location>
        <position position="349"/>
    </location>
</feature>
<feature type="mutagenesis site" description="Not viable in aerobic conditions. Lethal; when associated with S-61." evidence="8 9">
    <original>C</original>
    <variation>S</variation>
    <location>
        <position position="25"/>
    </location>
</feature>
<feature type="mutagenesis site" description="Lethal; when associated with S-25." evidence="9">
    <original>C</original>
    <variation>S</variation>
    <location>
        <position position="61"/>
    </location>
</feature>
<feature type="mutagenesis site" description="Lethal; when associated with D-225." evidence="5">
    <original>G</original>
    <variation>D</variation>
    <location>
        <position position="224"/>
    </location>
</feature>
<feature type="mutagenesis site" description="Lethal; when associated with D-224." evidence="5">
    <original>G</original>
    <variation>D</variation>
    <location>
        <position position="225"/>
    </location>
</feature>
<feature type="mutagenesis site" description="Lethal; when associated with D-471." evidence="5">
    <original>G</original>
    <variation>D</variation>
    <location>
        <position position="470"/>
    </location>
</feature>
<feature type="mutagenesis site" description="Lethal; when associated with D-470." evidence="5">
    <original>G</original>
    <variation>D</variation>
    <location>
        <position position="471"/>
    </location>
</feature>
<feature type="mutagenesis site" description="Lethal. Inhibits translation in vitro." evidence="5">
    <original>E</original>
    <variation>Q</variation>
    <location>
        <position position="493"/>
    </location>
</feature>
<feature type="strand" evidence="12">
    <location>
        <begin position="6"/>
        <end position="11"/>
    </location>
</feature>
<feature type="turn" evidence="12">
    <location>
        <begin position="18"/>
        <end position="20"/>
    </location>
</feature>
<feature type="helix" evidence="12">
    <location>
        <begin position="24"/>
        <end position="28"/>
    </location>
</feature>
<feature type="helix" evidence="12">
    <location>
        <begin position="30"/>
        <end position="33"/>
    </location>
</feature>
<feature type="strand" evidence="12">
    <location>
        <begin position="38"/>
        <end position="40"/>
    </location>
</feature>
<feature type="strand" evidence="13">
    <location>
        <begin position="45"/>
        <end position="47"/>
    </location>
</feature>
<feature type="strand" evidence="12">
    <location>
        <begin position="52"/>
        <end position="54"/>
    </location>
</feature>
<feature type="helix" evidence="12">
    <location>
        <begin position="60"/>
        <end position="63"/>
    </location>
</feature>
<feature type="strand" evidence="12">
    <location>
        <begin position="66"/>
        <end position="68"/>
    </location>
</feature>
<feature type="strand" evidence="12">
    <location>
        <begin position="70"/>
        <end position="75"/>
    </location>
</feature>
<feature type="strand" evidence="12">
    <location>
        <begin position="85"/>
        <end position="88"/>
    </location>
</feature>
<feature type="strand" evidence="12">
    <location>
        <begin position="104"/>
        <end position="109"/>
    </location>
</feature>
<feature type="helix" evidence="12">
    <location>
        <begin position="116"/>
        <end position="124"/>
    </location>
</feature>
<feature type="strand" evidence="12">
    <location>
        <begin position="125"/>
        <end position="127"/>
    </location>
</feature>
<feature type="strand" evidence="12">
    <location>
        <begin position="134"/>
        <end position="136"/>
    </location>
</feature>
<feature type="helix" evidence="12">
    <location>
        <begin position="140"/>
        <end position="146"/>
    </location>
</feature>
<feature type="turn" evidence="12">
    <location>
        <begin position="147"/>
        <end position="149"/>
    </location>
</feature>
<feature type="helix" evidence="12">
    <location>
        <begin position="151"/>
        <end position="160"/>
    </location>
</feature>
<feature type="strand" evidence="12">
    <location>
        <begin position="166"/>
        <end position="169"/>
    </location>
</feature>
<feature type="turn" evidence="12">
    <location>
        <begin position="173"/>
        <end position="178"/>
    </location>
</feature>
<feature type="strand" evidence="12">
    <location>
        <begin position="181"/>
        <end position="184"/>
    </location>
</feature>
<feature type="helix" evidence="12">
    <location>
        <begin position="187"/>
        <end position="193"/>
    </location>
</feature>
<feature type="turn" evidence="12">
    <location>
        <begin position="199"/>
        <end position="201"/>
    </location>
</feature>
<feature type="helix" evidence="12">
    <location>
        <begin position="205"/>
        <end position="208"/>
    </location>
</feature>
<feature type="helix" evidence="12">
    <location>
        <begin position="213"/>
        <end position="215"/>
    </location>
</feature>
<feature type="strand" evidence="12">
    <location>
        <begin position="216"/>
        <end position="218"/>
    </location>
</feature>
<feature type="helix" evidence="12">
    <location>
        <begin position="219"/>
        <end position="221"/>
    </location>
</feature>
<feature type="helix" evidence="12">
    <location>
        <begin position="224"/>
        <end position="237"/>
    </location>
</feature>
<feature type="strand" evidence="12">
    <location>
        <begin position="241"/>
        <end position="247"/>
    </location>
</feature>
<feature type="turn" evidence="12">
    <location>
        <begin position="248"/>
        <end position="251"/>
    </location>
</feature>
<feature type="helix" evidence="12">
    <location>
        <begin position="254"/>
        <end position="266"/>
    </location>
</feature>
<feature type="strand" evidence="12">
    <location>
        <begin position="273"/>
        <end position="277"/>
    </location>
</feature>
<feature type="helix" evidence="12">
    <location>
        <begin position="281"/>
        <end position="287"/>
    </location>
</feature>
<feature type="strand" evidence="12">
    <location>
        <begin position="289"/>
        <end position="297"/>
    </location>
</feature>
<feature type="turn" evidence="12">
    <location>
        <begin position="298"/>
        <end position="300"/>
    </location>
</feature>
<feature type="strand" evidence="12">
    <location>
        <begin position="301"/>
        <end position="304"/>
    </location>
</feature>
<feature type="helix" evidence="12">
    <location>
        <begin position="310"/>
        <end position="319"/>
    </location>
</feature>
<feature type="turn" evidence="12">
    <location>
        <begin position="323"/>
        <end position="326"/>
    </location>
</feature>
<feature type="strand" evidence="12">
    <location>
        <begin position="364"/>
        <end position="366"/>
    </location>
</feature>
<feature type="strand" evidence="13">
    <location>
        <begin position="367"/>
        <end position="370"/>
    </location>
</feature>
<feature type="strand" evidence="12">
    <location>
        <begin position="377"/>
        <end position="379"/>
    </location>
</feature>
<feature type="strand" evidence="12">
    <location>
        <begin position="381"/>
        <end position="383"/>
    </location>
</feature>
<feature type="strand" evidence="12">
    <location>
        <begin position="387"/>
        <end position="389"/>
    </location>
</feature>
<feature type="helix" evidence="12">
    <location>
        <begin position="391"/>
        <end position="398"/>
    </location>
</feature>
<feature type="strand" evidence="12">
    <location>
        <begin position="415"/>
        <end position="417"/>
    </location>
</feature>
<feature type="strand" evidence="13">
    <location>
        <begin position="427"/>
        <end position="429"/>
    </location>
</feature>
<feature type="helix" evidence="12">
    <location>
        <begin position="430"/>
        <end position="436"/>
    </location>
</feature>
<feature type="strand" evidence="12">
    <location>
        <begin position="444"/>
        <end position="447"/>
    </location>
</feature>
<feature type="helix" evidence="12">
    <location>
        <begin position="448"/>
        <end position="452"/>
    </location>
</feature>
<feature type="helix" evidence="12">
    <location>
        <begin position="457"/>
        <end position="460"/>
    </location>
</feature>
<feature type="strand" evidence="12">
    <location>
        <begin position="462"/>
        <end position="465"/>
    </location>
</feature>
<feature type="helix" evidence="12">
    <location>
        <begin position="470"/>
        <end position="482"/>
    </location>
</feature>
<feature type="strand" evidence="12">
    <location>
        <begin position="486"/>
        <end position="490"/>
    </location>
</feature>
<feature type="turn" evidence="13">
    <location>
        <begin position="494"/>
        <end position="497"/>
    </location>
</feature>
<feature type="helix" evidence="12">
    <location>
        <begin position="500"/>
        <end position="516"/>
    </location>
</feature>
<feature type="strand" evidence="13">
    <location>
        <begin position="520"/>
        <end position="524"/>
    </location>
</feature>
<feature type="helix" evidence="12">
    <location>
        <begin position="529"/>
        <end position="533"/>
    </location>
</feature>
<feature type="strand" evidence="12">
    <location>
        <begin position="536"/>
        <end position="539"/>
    </location>
</feature>
<feature type="turn" evidence="13">
    <location>
        <begin position="545"/>
        <end position="547"/>
    </location>
</feature>
<feature type="strand" evidence="12">
    <location>
        <begin position="554"/>
        <end position="556"/>
    </location>
</feature>
<feature type="helix" evidence="12">
    <location>
        <begin position="557"/>
        <end position="566"/>
    </location>
</feature>
<feature type="turn" evidence="12">
    <location>
        <begin position="567"/>
        <end position="569"/>
    </location>
</feature>
<feature type="strand" evidence="12">
    <location>
        <begin position="572"/>
        <end position="574"/>
    </location>
</feature>
<feature type="turn" evidence="12">
    <location>
        <begin position="576"/>
        <end position="578"/>
    </location>
</feature>
<feature type="strand" evidence="12">
    <location>
        <begin position="581"/>
        <end position="583"/>
    </location>
</feature>
<feature type="helix" evidence="12">
    <location>
        <begin position="589"/>
        <end position="597"/>
    </location>
</feature>
<feature type="strand" evidence="13">
    <location>
        <begin position="600"/>
        <end position="602"/>
    </location>
</feature>
<gene>
    <name type="primary">RLI1</name>
    <name type="ordered locus">YDR091C</name>
</gene>
<sequence length="608" mass="68340">MSDKNSRIAIVSADKCKPKKCRQECKRSCPVVKTGKLCIEVTPTSKIAFISEILCIGCGICVKKCPFDAIQIINLPTNLEAHVTHRYSANSFKLHRLPTPRPGQVLGLVGTNGIGKSTALKILAGKQKPNLGRFDDPPEWQEIIKYFRGSELQNYFTKMLEDDIKAIIKPQYVDNIPRAIKGPVQKVGELLKLRMEKSPEDVKRYIKILQLENVLKRDIEKLSGGELQRFAIGMSCVQEADVYMFDEPSSYLDVKQRLNAAQIIRSLLAPTKYVICVEHDLSVLDYLSDFVCIIYGVPSVYGVVTLPASVREGINIFLDGHIPAENLRFRTEALQFRIADATEDLQNDSASRAFSYPSLKKTQGDFVLNVEEGEFSDSEILVMMGENGTGKTTLIKLLAGALKPDEGQDIPKLNVSMKPQKIAPKFPGTVRQLFFKKIRGQFLNPQFQTDVVKPLRIDDIIDQEVQHLSGGELQRVAIVLALGIPADIYLIDEPSAYLDSEQRIICSKVIRRFILHNKKTAFIVEHDFIMATYLADKVIVFEGIPSKNAHARAPESLLTGCNRFLKNLNVTFRRDPNSFRPRINKLDSQMDKEQKSSGNYFFLDNTGI</sequence>
<comment type="function">
    <text evidence="5 6 7">Component of the multifactor complex (MFC) involved in translation initiation. Required for the binding of MFC to the 40S ribosome. Required for the processing and nuclear export of the 60S and 40S ribosomal subunits.</text>
</comment>
<comment type="subunit">
    <text evidence="5 6 7 8">Component of the multifactor complex (MFC) composed of at least RLI1, the eIF2 subunit SUI2, TIF5/eIF5, and the eIF3 subunits PRT1, HCR1, NIP1, RPG1, TIF34 and TIF35. The complex associates with pre-initiation complexes. Interacts with the complex YAE1:LTO1; the complex bridges the interaction between the CIA complex and RLI1 (PubMed:23318452).</text>
</comment>
<comment type="interaction">
    <interactant intactId="EBI-35146">
        <id>Q03195</id>
    </interactant>
    <interactant intactId="EBI-8944">
        <id>Q05775</id>
        <label>HCR1</label>
    </interactant>
    <organismsDiffer>false</organismsDiffer>
    <experiments>5</experiments>
</comment>
<comment type="interaction">
    <interactant intactId="EBI-35146">
        <id>Q03195</id>
    </interactant>
    <interactant intactId="EBI-6533">
        <id>P12385</id>
        <label>SUP45</label>
    </interactant>
    <organismsDiffer>false</organismsDiffer>
    <experiments>5</experiments>
</comment>
<comment type="interaction">
    <interactant intactId="EBI-35146">
        <id>Q03195</id>
    </interactant>
    <interactant intactId="EBI-25522">
        <id>P47118</id>
        <label>YAE1</label>
    </interactant>
    <organismsDiffer>false</organismsDiffer>
    <experiments>2</experiments>
</comment>
<comment type="interaction">
    <interactant intactId="EBI-35146">
        <id>Q03195</id>
    </interactant>
    <interactant intactId="EBI-7724365">
        <id>Q6Q7I0</id>
        <label>SUP35</label>
    </interactant>
    <organismsDiffer>true</organismsDiffer>
    <experiments>2</experiments>
</comment>
<comment type="subcellular location">
    <subcellularLocation>
        <location evidence="3 5 6 7">Cytoplasm</location>
    </subcellularLocation>
    <subcellularLocation>
        <location evidence="5 6 7">Nucleus</location>
    </subcellularLocation>
    <text evidence="6 7">Shuttles between the nucleus and the cytoplasm.</text>
</comment>
<comment type="miscellaneous">
    <text evidence="4">Present with 6280 molecules/cell in log phase SD medium.</text>
</comment>
<comment type="similarity">
    <text evidence="10">Belongs to the ABC transporter superfamily. ABCE family.</text>
</comment>
<proteinExistence type="evidence at protein level"/>
<accession>Q03195</accession>
<accession>D6VS78</accession>
<evidence type="ECO:0000255" key="1">
    <source>
        <dbReference type="PROSITE-ProRule" id="PRU00434"/>
    </source>
</evidence>
<evidence type="ECO:0000255" key="2">
    <source>
        <dbReference type="PROSITE-ProRule" id="PRU00711"/>
    </source>
</evidence>
<evidence type="ECO:0000269" key="3">
    <source>
    </source>
</evidence>
<evidence type="ECO:0000269" key="4">
    <source>
    </source>
</evidence>
<evidence type="ECO:0000269" key="5">
    <source>
    </source>
</evidence>
<evidence type="ECO:0000269" key="6">
    <source>
    </source>
</evidence>
<evidence type="ECO:0000269" key="7">
    <source>
    </source>
</evidence>
<evidence type="ECO:0000269" key="8">
    <source>
    </source>
</evidence>
<evidence type="ECO:0000269" key="9">
    <source>
    </source>
</evidence>
<evidence type="ECO:0000305" key="10"/>
<evidence type="ECO:0007744" key="11">
    <source>
    </source>
</evidence>
<evidence type="ECO:0007829" key="12">
    <source>
        <dbReference type="PDB" id="7A1G"/>
    </source>
</evidence>
<evidence type="ECO:0007829" key="13">
    <source>
        <dbReference type="PDB" id="8CAS"/>
    </source>
</evidence>
<keyword id="KW-0002">3D-structure</keyword>
<keyword id="KW-0067">ATP-binding</keyword>
<keyword id="KW-0963">Cytoplasm</keyword>
<keyword id="KW-0396">Initiation factor</keyword>
<keyword id="KW-0547">Nucleotide-binding</keyword>
<keyword id="KW-0539">Nucleus</keyword>
<keyword id="KW-0597">Phosphoprotein</keyword>
<keyword id="KW-0648">Protein biosynthesis</keyword>
<keyword id="KW-1185">Reference proteome</keyword>
<keyword id="KW-0677">Repeat</keyword>
<keyword id="KW-0690">Ribosome biogenesis</keyword>
<keyword id="KW-0698">rRNA processing</keyword>
<keyword id="KW-0813">Transport</keyword>
<organism>
    <name type="scientific">Saccharomyces cerevisiae (strain ATCC 204508 / S288c)</name>
    <name type="common">Baker's yeast</name>
    <dbReference type="NCBI Taxonomy" id="559292"/>
    <lineage>
        <taxon>Eukaryota</taxon>
        <taxon>Fungi</taxon>
        <taxon>Dikarya</taxon>
        <taxon>Ascomycota</taxon>
        <taxon>Saccharomycotina</taxon>
        <taxon>Saccharomycetes</taxon>
        <taxon>Saccharomycetales</taxon>
        <taxon>Saccharomycetaceae</taxon>
        <taxon>Saccharomyces</taxon>
    </lineage>
</organism>
<protein>
    <recommendedName>
        <fullName>Translation initiation factor RLI1</fullName>
    </recommendedName>
    <alternativeName>
        <fullName>ATP-binding cassette sub-family E member RLI1</fullName>
    </alternativeName>
    <alternativeName>
        <fullName>RNase L inhibitor</fullName>
    </alternativeName>
</protein>
<reference key="1">
    <citation type="journal article" date="1997" name="Nature">
        <title>The nucleotide sequence of Saccharomyces cerevisiae chromosome IV.</title>
        <authorList>
            <person name="Jacq C."/>
            <person name="Alt-Moerbe J."/>
            <person name="Andre B."/>
            <person name="Arnold W."/>
            <person name="Bahr A."/>
            <person name="Ballesta J.P.G."/>
            <person name="Bargues M."/>
            <person name="Baron L."/>
            <person name="Becker A."/>
            <person name="Biteau N."/>
            <person name="Bloecker H."/>
            <person name="Blugeon C."/>
            <person name="Boskovic J."/>
            <person name="Brandt P."/>
            <person name="Brueckner M."/>
            <person name="Buitrago M.J."/>
            <person name="Coster F."/>
            <person name="Delaveau T."/>
            <person name="del Rey F."/>
            <person name="Dujon B."/>
            <person name="Eide L.G."/>
            <person name="Garcia-Cantalejo J.M."/>
            <person name="Goffeau A."/>
            <person name="Gomez-Peris A."/>
            <person name="Granotier C."/>
            <person name="Hanemann V."/>
            <person name="Hankeln T."/>
            <person name="Hoheisel J.D."/>
            <person name="Jaeger W."/>
            <person name="Jimenez A."/>
            <person name="Jonniaux J.-L."/>
            <person name="Kraemer C."/>
            <person name="Kuester H."/>
            <person name="Laamanen P."/>
            <person name="Legros Y."/>
            <person name="Louis E.J."/>
            <person name="Moeller-Rieker S."/>
            <person name="Monnet A."/>
            <person name="Moro M."/>
            <person name="Mueller-Auer S."/>
            <person name="Nussbaumer B."/>
            <person name="Paricio N."/>
            <person name="Paulin L."/>
            <person name="Perea J."/>
            <person name="Perez-Alonso M."/>
            <person name="Perez-Ortin J.E."/>
            <person name="Pohl T.M."/>
            <person name="Prydz H."/>
            <person name="Purnelle B."/>
            <person name="Rasmussen S.W."/>
            <person name="Remacha M.A."/>
            <person name="Revuelta J.L."/>
            <person name="Rieger M."/>
            <person name="Salom D."/>
            <person name="Saluz H.P."/>
            <person name="Saiz J.E."/>
            <person name="Saren A.-M."/>
            <person name="Schaefer M."/>
            <person name="Scharfe M."/>
            <person name="Schmidt E.R."/>
            <person name="Schneider C."/>
            <person name="Scholler P."/>
            <person name="Schwarz S."/>
            <person name="Soler-Mira A."/>
            <person name="Urrestarazu L.A."/>
            <person name="Verhasselt P."/>
            <person name="Vissers S."/>
            <person name="Voet M."/>
            <person name="Volckaert G."/>
            <person name="Wagner G."/>
            <person name="Wambutt R."/>
            <person name="Wedler E."/>
            <person name="Wedler H."/>
            <person name="Woelfl S."/>
            <person name="Harris D.E."/>
            <person name="Bowman S."/>
            <person name="Brown D."/>
            <person name="Churcher C.M."/>
            <person name="Connor R."/>
            <person name="Dedman K."/>
            <person name="Gentles S."/>
            <person name="Hamlin N."/>
            <person name="Hunt S."/>
            <person name="Jones L."/>
            <person name="McDonald S."/>
            <person name="Murphy L.D."/>
            <person name="Niblett D."/>
            <person name="Odell C."/>
            <person name="Oliver K."/>
            <person name="Rajandream M.A."/>
            <person name="Richards C."/>
            <person name="Shore L."/>
            <person name="Walsh S.V."/>
            <person name="Barrell B.G."/>
            <person name="Dietrich F.S."/>
            <person name="Mulligan J.T."/>
            <person name="Allen E."/>
            <person name="Araujo R."/>
            <person name="Aviles E."/>
            <person name="Berno A."/>
            <person name="Carpenter J."/>
            <person name="Chen E."/>
            <person name="Cherry J.M."/>
            <person name="Chung E."/>
            <person name="Duncan M."/>
            <person name="Hunicke-Smith S."/>
            <person name="Hyman R.W."/>
            <person name="Komp C."/>
            <person name="Lashkari D."/>
            <person name="Lew H."/>
            <person name="Lin D."/>
            <person name="Mosedale D."/>
            <person name="Nakahara K."/>
            <person name="Namath A."/>
            <person name="Oefner P."/>
            <person name="Oh C."/>
            <person name="Petel F.X."/>
            <person name="Roberts D."/>
            <person name="Schramm S."/>
            <person name="Schroeder M."/>
            <person name="Shogren T."/>
            <person name="Shroff N."/>
            <person name="Winant A."/>
            <person name="Yelton M.A."/>
            <person name="Botstein D."/>
            <person name="Davis R.W."/>
            <person name="Johnston M."/>
            <person name="Andrews S."/>
            <person name="Brinkman R."/>
            <person name="Cooper J."/>
            <person name="Ding H."/>
            <person name="Du Z."/>
            <person name="Favello A."/>
            <person name="Fulton L."/>
            <person name="Gattung S."/>
            <person name="Greco T."/>
            <person name="Hallsworth K."/>
            <person name="Hawkins J."/>
            <person name="Hillier L.W."/>
            <person name="Jier M."/>
            <person name="Johnson D."/>
            <person name="Johnston L."/>
            <person name="Kirsten J."/>
            <person name="Kucaba T."/>
            <person name="Langston Y."/>
            <person name="Latreille P."/>
            <person name="Le T."/>
            <person name="Mardis E."/>
            <person name="Menezes S."/>
            <person name="Miller N."/>
            <person name="Nhan M."/>
            <person name="Pauley A."/>
            <person name="Peluso D."/>
            <person name="Rifkin L."/>
            <person name="Riles L."/>
            <person name="Taich A."/>
            <person name="Trevaskis E."/>
            <person name="Vignati D."/>
            <person name="Wilcox L."/>
            <person name="Wohldman P."/>
            <person name="Vaudin M."/>
            <person name="Wilson R."/>
            <person name="Waterston R."/>
            <person name="Albermann K."/>
            <person name="Hani J."/>
            <person name="Heumann K."/>
            <person name="Kleine K."/>
            <person name="Mewes H.-W."/>
            <person name="Zollner A."/>
            <person name="Zaccaria P."/>
        </authorList>
    </citation>
    <scope>NUCLEOTIDE SEQUENCE [LARGE SCALE GENOMIC DNA]</scope>
    <source>
        <strain>ATCC 204508 / S288c</strain>
    </source>
</reference>
<reference key="2">
    <citation type="journal article" date="2014" name="G3 (Bethesda)">
        <title>The reference genome sequence of Saccharomyces cerevisiae: Then and now.</title>
        <authorList>
            <person name="Engel S.R."/>
            <person name="Dietrich F.S."/>
            <person name="Fisk D.G."/>
            <person name="Binkley G."/>
            <person name="Balakrishnan R."/>
            <person name="Costanzo M.C."/>
            <person name="Dwight S.S."/>
            <person name="Hitz B.C."/>
            <person name="Karra K."/>
            <person name="Nash R.S."/>
            <person name="Weng S."/>
            <person name="Wong E.D."/>
            <person name="Lloyd P."/>
            <person name="Skrzypek M.S."/>
            <person name="Miyasato S.R."/>
            <person name="Simison M."/>
            <person name="Cherry J.M."/>
        </authorList>
    </citation>
    <scope>GENOME REANNOTATION</scope>
    <source>
        <strain>ATCC 204508 / S288c</strain>
    </source>
</reference>
<reference key="3">
    <citation type="journal article" date="2007" name="Genome Res.">
        <title>Approaching a complete repository of sequence-verified protein-encoding clones for Saccharomyces cerevisiae.</title>
        <authorList>
            <person name="Hu Y."/>
            <person name="Rolfs A."/>
            <person name="Bhullar B."/>
            <person name="Murthy T.V.S."/>
            <person name="Zhu C."/>
            <person name="Berger M.F."/>
            <person name="Camargo A.A."/>
            <person name="Kelley F."/>
            <person name="McCarron S."/>
            <person name="Jepson D."/>
            <person name="Richardson A."/>
            <person name="Raphael J."/>
            <person name="Moreira D."/>
            <person name="Taycher E."/>
            <person name="Zuo D."/>
            <person name="Mohr S."/>
            <person name="Kane M.F."/>
            <person name="Williamson J."/>
            <person name="Simpson A.J.G."/>
            <person name="Bulyk M.L."/>
            <person name="Harlow E."/>
            <person name="Marsischky G."/>
            <person name="Kolodner R.D."/>
            <person name="LaBaer J."/>
        </authorList>
    </citation>
    <scope>NUCLEOTIDE SEQUENCE [GENOMIC DNA]</scope>
    <source>
        <strain>ATCC 204508 / S288c</strain>
    </source>
</reference>
<reference key="4">
    <citation type="journal article" date="2003" name="Nature">
        <title>Global analysis of protein localization in budding yeast.</title>
        <authorList>
            <person name="Huh W.-K."/>
            <person name="Falvo J.V."/>
            <person name="Gerke L.C."/>
            <person name="Carroll A.S."/>
            <person name="Howson R.W."/>
            <person name="Weissman J.S."/>
            <person name="O'Shea E.K."/>
        </authorList>
    </citation>
    <scope>SUBCELLULAR LOCATION [LARGE SCALE ANALYSIS]</scope>
</reference>
<reference key="5">
    <citation type="journal article" date="2003" name="Nature">
        <title>Global analysis of protein expression in yeast.</title>
        <authorList>
            <person name="Ghaemmaghami S."/>
            <person name="Huh W.-K."/>
            <person name="Bower K."/>
            <person name="Howson R.W."/>
            <person name="Belle A."/>
            <person name="Dephoure N."/>
            <person name="O'Shea E.K."/>
            <person name="Weissman J.S."/>
        </authorList>
    </citation>
    <scope>LEVEL OF PROTEIN EXPRESSION [LARGE SCALE ANALYSIS]</scope>
</reference>
<reference key="6">
    <citation type="journal article" date="2004" name="J. Biol. Chem.">
        <title>The essential ATP-binding cassette protein RLI1 functions in translation by promoting preinitiation complex assembly.</title>
        <authorList>
            <person name="Dong J."/>
            <person name="Lai R."/>
            <person name="Nielsen K."/>
            <person name="Fekete C.A."/>
            <person name="Qiu H."/>
            <person name="Hinnebusch A.G."/>
        </authorList>
    </citation>
    <scope>FUNCTION</scope>
    <scope>IDENTIFICATION IN THE MFC COMPLEX</scope>
    <scope>MUTAGENESIS OF GLY-224; GLY-225; GLY-470; GLY-471 AND GLU-493</scope>
    <scope>SUBCELLULAR LOCATION</scope>
</reference>
<reference key="7">
    <citation type="journal article" date="2005" name="EMBO J.">
        <title>Functional link between ribosome formation and biogenesis of iron-sulfur proteins.</title>
        <authorList>
            <person name="Yarunin A."/>
            <person name="Panse V.G."/>
            <person name="Petfalski E."/>
            <person name="Dez C."/>
            <person name="Tollervey D."/>
            <person name="Hurt E.C."/>
        </authorList>
    </citation>
    <scope>FUNCTION</scope>
    <scope>SUBCELLULAR LOCATION</scope>
    <scope>ASSOCIATION WITH PRE-RIBOSOMAL PARTICLES</scope>
    <scope>IDENTIFICATION IN THE MFC COMPLEX</scope>
</reference>
<reference key="8">
    <citation type="journal article" date="2005" name="EMBO J.">
        <title>Biogenesis of cytosolic ribosomes requires the essential iron-sulphur protein Rli1p and mitochondria.</title>
        <authorList>
            <person name="Kispal G."/>
            <person name="Sipos K."/>
            <person name="Lange H."/>
            <person name="Fekete Z."/>
            <person name="Bedekovics T."/>
            <person name="Janaky T."/>
            <person name="Bassler J."/>
            <person name="Aguilar Netz D.J."/>
            <person name="Balk J."/>
            <person name="Rotte C."/>
            <person name="Lill R."/>
        </authorList>
    </citation>
    <scope>FUNCTION</scope>
    <scope>SUBCELLULAR LOCATION</scope>
    <scope>IDENTIFICATION BY MASS SPECTROMETRY</scope>
    <scope>ASSOCIATION WITH PRE-RIBOSOMAL PARTICLES</scope>
    <scope>IDENTIFICATION IN THE MFC COMPLEX</scope>
</reference>
<reference key="9">
    <citation type="journal article" date="2008" name="Mol. Cell. Proteomics">
        <title>A multidimensional chromatography technology for in-depth phosphoproteome analysis.</title>
        <authorList>
            <person name="Albuquerque C.P."/>
            <person name="Smolka M.B."/>
            <person name="Payne S.H."/>
            <person name="Bafna V."/>
            <person name="Eng J."/>
            <person name="Zhou H."/>
        </authorList>
    </citation>
    <scope>IDENTIFICATION BY MASS SPECTROMETRY [LARGE SCALE ANALYSIS]</scope>
</reference>
<reference key="10">
    <citation type="journal article" date="2009" name="Science">
        <title>Global analysis of Cdk1 substrate phosphorylation sites provides insights into evolution.</title>
        <authorList>
            <person name="Holt L.J."/>
            <person name="Tuch B.B."/>
            <person name="Villen J."/>
            <person name="Johnson A.D."/>
            <person name="Gygi S.P."/>
            <person name="Morgan D.O."/>
        </authorList>
    </citation>
    <scope>PHOSPHORYLATION [LARGE SCALE ANALYSIS] AT SER-349</scope>
    <scope>IDENTIFICATION BY MASS SPECTROMETRY [LARGE SCALE ANALYSIS]</scope>
</reference>
<reference key="11">
    <citation type="journal article" date="2014" name="Oncogene">
        <title>The function of ORAOV1/LTO1, a gene that is overexpressed frequently in cancer: essential roles in the function and biogenesis of the ribosome.</title>
        <authorList>
            <person name="Zhai C."/>
            <person name="Li Y."/>
            <person name="Mascarenhas C."/>
            <person name="Lin Q."/>
            <person name="Li K."/>
            <person name="Vyrides I."/>
            <person name="Grant C.M."/>
            <person name="Panaretou B."/>
        </authorList>
    </citation>
    <scope>INTERACTION WITH YAE1</scope>
    <scope>MUTAGENESIS OF CYS-25</scope>
</reference>
<reference key="12">
    <citation type="journal article" date="2015" name="Elife">
        <title>The deca-GX3 proteins Yae1-Lto1 function as adaptors recruiting the ABC protein Rli1 for iron-sulfur cluster insertion.</title>
        <authorList>
            <person name="Paul V.D."/>
            <person name="Muehlenhoff U."/>
            <person name="Stuempfig M."/>
            <person name="Seebacher J."/>
            <person name="Kugler K.G."/>
            <person name="Renicke C."/>
            <person name="Taxis C."/>
            <person name="Gavin A.C."/>
            <person name="Pierik A.J."/>
            <person name="Lill R."/>
        </authorList>
    </citation>
    <scope>INTERACTION WITH YAE1</scope>
    <scope>MUTAGENESIS OF CYS-25 AND CYS-61</scope>
</reference>
<dbReference type="EMBL" id="Z50111">
    <property type="protein sequence ID" value="CAA90450.1"/>
    <property type="molecule type" value="Genomic_DNA"/>
</dbReference>
<dbReference type="EMBL" id="AY723776">
    <property type="protein sequence ID" value="AAU09693.1"/>
    <property type="molecule type" value="Genomic_DNA"/>
</dbReference>
<dbReference type="EMBL" id="BK006938">
    <property type="protein sequence ID" value="DAA11938.1"/>
    <property type="molecule type" value="Genomic_DNA"/>
</dbReference>
<dbReference type="PIR" id="S58091">
    <property type="entry name" value="S58091"/>
</dbReference>
<dbReference type="RefSeq" id="NP_010376.3">
    <property type="nucleotide sequence ID" value="NM_001180399.3"/>
</dbReference>
<dbReference type="PDB" id="3J16">
    <property type="method" value="EM"/>
    <property type="chains" value="B=1-608"/>
</dbReference>
<dbReference type="PDB" id="4CRM">
    <property type="method" value="EM"/>
    <property type="resolution" value="8.75 A"/>
    <property type="chains" value="P=1-608"/>
</dbReference>
<dbReference type="PDB" id="5LL6">
    <property type="method" value="EM"/>
    <property type="resolution" value="3.90 A"/>
    <property type="chains" value="h=1-608"/>
</dbReference>
<dbReference type="PDB" id="6ZCE">
    <property type="method" value="EM"/>
    <property type="resolution" value="5.30 A"/>
    <property type="chains" value="k=1-608"/>
</dbReference>
<dbReference type="PDB" id="6ZU9">
    <property type="method" value="EM"/>
    <property type="resolution" value="6.20 A"/>
    <property type="chains" value="k=1-608"/>
</dbReference>
<dbReference type="PDB" id="7A1G">
    <property type="method" value="EM"/>
    <property type="resolution" value="3.00 A"/>
    <property type="chains" value="x=4-604"/>
</dbReference>
<dbReference type="PDB" id="8CAH">
    <property type="method" value="EM"/>
    <property type="resolution" value="3.00 A"/>
    <property type="chains" value="x=1-608"/>
</dbReference>
<dbReference type="PDB" id="8CAS">
    <property type="method" value="EM"/>
    <property type="resolution" value="3.30 A"/>
    <property type="chains" value="k=1-608"/>
</dbReference>
<dbReference type="PDBsum" id="3J16"/>
<dbReference type="PDBsum" id="4CRM"/>
<dbReference type="PDBsum" id="5LL6"/>
<dbReference type="PDBsum" id="6ZCE"/>
<dbReference type="PDBsum" id="6ZU9"/>
<dbReference type="PDBsum" id="7A1G"/>
<dbReference type="PDBsum" id="8CAH"/>
<dbReference type="PDBsum" id="8CAS"/>
<dbReference type="EMDB" id="EMD-11160"/>
<dbReference type="EMDB" id="EMD-11439"/>
<dbReference type="EMDB" id="EMD-11608"/>
<dbReference type="EMDB" id="EMD-2598"/>
<dbReference type="SMR" id="Q03195"/>
<dbReference type="BioGRID" id="32148">
    <property type="interactions" value="229"/>
</dbReference>
<dbReference type="DIP" id="DIP-4492N"/>
<dbReference type="FunCoup" id="Q03195">
    <property type="interactions" value="1514"/>
</dbReference>
<dbReference type="IntAct" id="Q03195">
    <property type="interactions" value="61"/>
</dbReference>
<dbReference type="MINT" id="Q03195"/>
<dbReference type="STRING" id="4932.YDR091C"/>
<dbReference type="GlyGen" id="Q03195">
    <property type="glycosylation" value="2 sites, 1 O-linked glycan (2 sites)"/>
</dbReference>
<dbReference type="iPTMnet" id="Q03195"/>
<dbReference type="PaxDb" id="4932-YDR091C"/>
<dbReference type="PeptideAtlas" id="Q03195"/>
<dbReference type="TopDownProteomics" id="Q03195"/>
<dbReference type="EnsemblFungi" id="YDR091C_mRNA">
    <property type="protein sequence ID" value="YDR091C"/>
    <property type="gene ID" value="YDR091C"/>
</dbReference>
<dbReference type="GeneID" id="851665"/>
<dbReference type="KEGG" id="sce:YDR091C"/>
<dbReference type="AGR" id="SGD:S000002498"/>
<dbReference type="SGD" id="S000002498">
    <property type="gene designation" value="RLI1"/>
</dbReference>
<dbReference type="VEuPathDB" id="FungiDB:YDR091C"/>
<dbReference type="eggNOG" id="KOG0063">
    <property type="taxonomic scope" value="Eukaryota"/>
</dbReference>
<dbReference type="GeneTree" id="ENSGT00390000015089"/>
<dbReference type="HOGENOM" id="CLU_017344_4_1_1"/>
<dbReference type="InParanoid" id="Q03195"/>
<dbReference type="OMA" id="MVCIQNG"/>
<dbReference type="OrthoDB" id="6593433at2759"/>
<dbReference type="BioCyc" id="YEAST:G3O-29696-MONOMER"/>
<dbReference type="BioGRID-ORCS" id="851665">
    <property type="hits" value="1 hit in 10 CRISPR screens"/>
</dbReference>
<dbReference type="EvolutionaryTrace" id="Q03195"/>
<dbReference type="PRO" id="PR:Q03195"/>
<dbReference type="Proteomes" id="UP000002311">
    <property type="component" value="Chromosome IV"/>
</dbReference>
<dbReference type="RNAct" id="Q03195">
    <property type="molecule type" value="protein"/>
</dbReference>
<dbReference type="GO" id="GO:0005737">
    <property type="term" value="C:cytoplasm"/>
    <property type="evidence" value="ECO:0000314"/>
    <property type="project" value="SGD"/>
</dbReference>
<dbReference type="GO" id="GO:0005829">
    <property type="term" value="C:cytosol"/>
    <property type="evidence" value="ECO:0000318"/>
    <property type="project" value="GO_Central"/>
</dbReference>
<dbReference type="GO" id="GO:0005634">
    <property type="term" value="C:nucleus"/>
    <property type="evidence" value="ECO:0000314"/>
    <property type="project" value="SGD"/>
</dbReference>
<dbReference type="GO" id="GO:0005524">
    <property type="term" value="F:ATP binding"/>
    <property type="evidence" value="ECO:0000318"/>
    <property type="project" value="GO_Central"/>
</dbReference>
<dbReference type="GO" id="GO:0016887">
    <property type="term" value="F:ATP hydrolysis activity"/>
    <property type="evidence" value="ECO:0007669"/>
    <property type="project" value="InterPro"/>
</dbReference>
<dbReference type="GO" id="GO:0005506">
    <property type="term" value="F:iron ion binding"/>
    <property type="evidence" value="ECO:0000314"/>
    <property type="project" value="SGD"/>
</dbReference>
<dbReference type="GO" id="GO:0043024">
    <property type="term" value="F:ribosomal small subunit binding"/>
    <property type="evidence" value="ECO:0000318"/>
    <property type="project" value="GO_Central"/>
</dbReference>
<dbReference type="GO" id="GO:0003743">
    <property type="term" value="F:translation initiation factor activity"/>
    <property type="evidence" value="ECO:0007669"/>
    <property type="project" value="UniProtKB-KW"/>
</dbReference>
<dbReference type="GO" id="GO:0045727">
    <property type="term" value="P:positive regulation of translation"/>
    <property type="evidence" value="ECO:0000315"/>
    <property type="project" value="SGD"/>
</dbReference>
<dbReference type="GO" id="GO:0042273">
    <property type="term" value="P:ribosomal large subunit biogenesis"/>
    <property type="evidence" value="ECO:0000314"/>
    <property type="project" value="UniProtKB"/>
</dbReference>
<dbReference type="GO" id="GO:0000054">
    <property type="term" value="P:ribosomal subunit export from nucleus"/>
    <property type="evidence" value="ECO:0000315"/>
    <property type="project" value="SGD"/>
</dbReference>
<dbReference type="GO" id="GO:0032790">
    <property type="term" value="P:ribosome disassembly"/>
    <property type="evidence" value="ECO:0000314"/>
    <property type="project" value="SGD"/>
</dbReference>
<dbReference type="GO" id="GO:0006364">
    <property type="term" value="P:rRNA processing"/>
    <property type="evidence" value="ECO:0007669"/>
    <property type="project" value="UniProtKB-KW"/>
</dbReference>
<dbReference type="GO" id="GO:0006413">
    <property type="term" value="P:translational initiation"/>
    <property type="evidence" value="ECO:0000315"/>
    <property type="project" value="SGD"/>
</dbReference>
<dbReference type="GO" id="GO:0006415">
    <property type="term" value="P:translational termination"/>
    <property type="evidence" value="ECO:0000316"/>
    <property type="project" value="SGD"/>
</dbReference>
<dbReference type="CDD" id="cd03236">
    <property type="entry name" value="ABC_RNaseL_inhibitor_domain1"/>
    <property type="match status" value="1"/>
</dbReference>
<dbReference type="FunFam" id="3.40.50.300:FF:000144">
    <property type="entry name" value="ATP-binding cassette sub-family E member 1"/>
    <property type="match status" value="1"/>
</dbReference>
<dbReference type="FunFam" id="3.40.50.300:FF:000152">
    <property type="entry name" value="ATP-binding cassette, sub-family E, member 1"/>
    <property type="match status" value="1"/>
</dbReference>
<dbReference type="Gene3D" id="3.40.50.300">
    <property type="entry name" value="P-loop containing nucleotide triphosphate hydrolases"/>
    <property type="match status" value="2"/>
</dbReference>
<dbReference type="InterPro" id="IPR017896">
    <property type="entry name" value="4Fe4S_Fe-S-bd"/>
</dbReference>
<dbReference type="InterPro" id="IPR017900">
    <property type="entry name" value="4Fe4S_Fe_S_CS"/>
</dbReference>
<dbReference type="InterPro" id="IPR003593">
    <property type="entry name" value="AAA+_ATPase"/>
</dbReference>
<dbReference type="InterPro" id="IPR003439">
    <property type="entry name" value="ABC_transporter-like_ATP-bd"/>
</dbReference>
<dbReference type="InterPro" id="IPR017871">
    <property type="entry name" value="ABC_transporter-like_CS"/>
</dbReference>
<dbReference type="InterPro" id="IPR027417">
    <property type="entry name" value="P-loop_NTPase"/>
</dbReference>
<dbReference type="InterPro" id="IPR013283">
    <property type="entry name" value="RLI1"/>
</dbReference>
<dbReference type="InterPro" id="IPR034348">
    <property type="entry name" value="RLI_dom_1"/>
</dbReference>
<dbReference type="InterPro" id="IPR007209">
    <property type="entry name" value="RNaseL-inhib-like_metal-bd_dom"/>
</dbReference>
<dbReference type="NCBIfam" id="NF009945">
    <property type="entry name" value="PRK13409.1"/>
    <property type="match status" value="1"/>
</dbReference>
<dbReference type="PANTHER" id="PTHR19248">
    <property type="entry name" value="ATP-BINDING TRANSPORT PROTEIN-RELATED"/>
    <property type="match status" value="1"/>
</dbReference>
<dbReference type="Pfam" id="PF00005">
    <property type="entry name" value="ABC_tran"/>
    <property type="match status" value="2"/>
</dbReference>
<dbReference type="Pfam" id="PF00037">
    <property type="entry name" value="Fer4"/>
    <property type="match status" value="1"/>
</dbReference>
<dbReference type="Pfam" id="PF04068">
    <property type="entry name" value="Fer4_RLI"/>
    <property type="match status" value="1"/>
</dbReference>
<dbReference type="PRINTS" id="PR01868">
    <property type="entry name" value="ABCEFAMILY"/>
</dbReference>
<dbReference type="SMART" id="SM00382">
    <property type="entry name" value="AAA"/>
    <property type="match status" value="2"/>
</dbReference>
<dbReference type="SUPFAM" id="SSF54862">
    <property type="entry name" value="4Fe-4S ferredoxins"/>
    <property type="match status" value="1"/>
</dbReference>
<dbReference type="SUPFAM" id="SSF52540">
    <property type="entry name" value="P-loop containing nucleoside triphosphate hydrolases"/>
    <property type="match status" value="2"/>
</dbReference>
<dbReference type="PROSITE" id="PS00198">
    <property type="entry name" value="4FE4S_FER_1"/>
    <property type="match status" value="1"/>
</dbReference>
<dbReference type="PROSITE" id="PS51379">
    <property type="entry name" value="4FE4S_FER_2"/>
    <property type="match status" value="2"/>
</dbReference>
<dbReference type="PROSITE" id="PS00211">
    <property type="entry name" value="ABC_TRANSPORTER_1"/>
    <property type="match status" value="1"/>
</dbReference>
<dbReference type="PROSITE" id="PS50893">
    <property type="entry name" value="ABC_TRANSPORTER_2"/>
    <property type="match status" value="2"/>
</dbReference>